<keyword id="KW-0131">Cell cycle</keyword>
<keyword id="KW-0132">Cell division</keyword>
<keyword id="KW-0717">Septation</keyword>
<reference key="1">
    <citation type="journal article" date="2008" name="BMC Genomics">
        <title>The missing link: Bordetella petrii is endowed with both the metabolic versatility of environmental bacteria and virulence traits of pathogenic Bordetellae.</title>
        <authorList>
            <person name="Gross R."/>
            <person name="Guzman C.A."/>
            <person name="Sebaihia M."/>
            <person name="Martin dos Santos V.A.P."/>
            <person name="Pieper D.H."/>
            <person name="Koebnik R."/>
            <person name="Lechner M."/>
            <person name="Bartels D."/>
            <person name="Buhrmester J."/>
            <person name="Choudhuri J.V."/>
            <person name="Ebensen T."/>
            <person name="Gaigalat L."/>
            <person name="Herrmann S."/>
            <person name="Khachane A.N."/>
            <person name="Larisch C."/>
            <person name="Link S."/>
            <person name="Linke B."/>
            <person name="Meyer F."/>
            <person name="Mormann S."/>
            <person name="Nakunst D."/>
            <person name="Rueckert C."/>
            <person name="Schneiker-Bekel S."/>
            <person name="Schulze K."/>
            <person name="Voerholter F.-J."/>
            <person name="Yevsa T."/>
            <person name="Engle J.T."/>
            <person name="Goldman W.E."/>
            <person name="Puehler A."/>
            <person name="Goebel U.B."/>
            <person name="Goesmann A."/>
            <person name="Bloecker H."/>
            <person name="Kaiser O."/>
            <person name="Martinez-Arias R."/>
        </authorList>
    </citation>
    <scope>NUCLEOTIDE SEQUENCE [LARGE SCALE GENOMIC DNA]</scope>
    <source>
        <strain>ATCC BAA-461 / DSM 12804 / CCUG 43448</strain>
    </source>
</reference>
<accession>A9I8C3</accession>
<proteinExistence type="inferred from homology"/>
<dbReference type="EMBL" id="AM902716">
    <property type="protein sequence ID" value="CAP41225.1"/>
    <property type="molecule type" value="Genomic_DNA"/>
</dbReference>
<dbReference type="SMR" id="A9I8C3"/>
<dbReference type="STRING" id="94624.Bpet0893"/>
<dbReference type="KEGG" id="bpt:Bpet0893"/>
<dbReference type="eggNOG" id="COG0850">
    <property type="taxonomic scope" value="Bacteria"/>
</dbReference>
<dbReference type="Proteomes" id="UP000001225">
    <property type="component" value="Chromosome"/>
</dbReference>
<dbReference type="GO" id="GO:0000902">
    <property type="term" value="P:cell morphogenesis"/>
    <property type="evidence" value="ECO:0007669"/>
    <property type="project" value="InterPro"/>
</dbReference>
<dbReference type="GO" id="GO:0000917">
    <property type="term" value="P:division septum assembly"/>
    <property type="evidence" value="ECO:0007669"/>
    <property type="project" value="UniProtKB-KW"/>
</dbReference>
<dbReference type="GO" id="GO:0051302">
    <property type="term" value="P:regulation of cell division"/>
    <property type="evidence" value="ECO:0007669"/>
    <property type="project" value="InterPro"/>
</dbReference>
<dbReference type="GO" id="GO:1901891">
    <property type="term" value="P:regulation of cell septum assembly"/>
    <property type="evidence" value="ECO:0007669"/>
    <property type="project" value="InterPro"/>
</dbReference>
<dbReference type="Gene3D" id="2.160.20.70">
    <property type="match status" value="1"/>
</dbReference>
<dbReference type="Gene3D" id="3.30.70.260">
    <property type="match status" value="1"/>
</dbReference>
<dbReference type="HAMAP" id="MF_00267">
    <property type="entry name" value="MinC"/>
    <property type="match status" value="1"/>
</dbReference>
<dbReference type="InterPro" id="IPR016098">
    <property type="entry name" value="CAP/MinC_C"/>
</dbReference>
<dbReference type="InterPro" id="IPR013033">
    <property type="entry name" value="MinC"/>
</dbReference>
<dbReference type="InterPro" id="IPR036145">
    <property type="entry name" value="MinC_C_sf"/>
</dbReference>
<dbReference type="InterPro" id="IPR007874">
    <property type="entry name" value="MinC_N"/>
</dbReference>
<dbReference type="InterPro" id="IPR005526">
    <property type="entry name" value="Septum_form_inhib_MinC_C"/>
</dbReference>
<dbReference type="NCBIfam" id="TIGR01222">
    <property type="entry name" value="minC"/>
    <property type="match status" value="1"/>
</dbReference>
<dbReference type="PANTHER" id="PTHR34108">
    <property type="entry name" value="SEPTUM SITE-DETERMINING PROTEIN MINC"/>
    <property type="match status" value="1"/>
</dbReference>
<dbReference type="PANTHER" id="PTHR34108:SF1">
    <property type="entry name" value="SEPTUM SITE-DETERMINING PROTEIN MINC"/>
    <property type="match status" value="1"/>
</dbReference>
<dbReference type="Pfam" id="PF03775">
    <property type="entry name" value="MinC_C"/>
    <property type="match status" value="1"/>
</dbReference>
<dbReference type="Pfam" id="PF05209">
    <property type="entry name" value="MinC_N"/>
    <property type="match status" value="1"/>
</dbReference>
<dbReference type="SUPFAM" id="SSF63848">
    <property type="entry name" value="Cell-division inhibitor MinC, C-terminal domain"/>
    <property type="match status" value="1"/>
</dbReference>
<name>MINC_BORPD</name>
<sequence>MTTDSLALDFKSATLYAIRVVLHDADLDRLTAALDQRMADAGSFFENEPVVVDASRVDDPIDWPALLAALRGHNLPPIGVVAEGANLAAAQAAGLAAVELSTPPARPAPAVETAPPNDAATPVPAVPAAALETGASATTGNAPAEPAPAEPAAPAAAPQPPAVPAPASALVITKPLRSGQRVYARHTDLVVIGMVSQGAEVIADGNVHVYGPLRGKAMAGARGDTSARIFTTQLDAELLAVAGVYRVVEDKLDSTLHNQPALVYLDGETLRVEALKR</sequence>
<gene>
    <name evidence="1" type="primary">minC</name>
    <name type="ordered locus">Bpet0893</name>
</gene>
<organism>
    <name type="scientific">Bordetella petrii (strain ATCC BAA-461 / DSM 12804 / CCUG 43448)</name>
    <dbReference type="NCBI Taxonomy" id="340100"/>
    <lineage>
        <taxon>Bacteria</taxon>
        <taxon>Pseudomonadati</taxon>
        <taxon>Pseudomonadota</taxon>
        <taxon>Betaproteobacteria</taxon>
        <taxon>Burkholderiales</taxon>
        <taxon>Alcaligenaceae</taxon>
        <taxon>Bordetella</taxon>
    </lineage>
</organism>
<comment type="function">
    <text evidence="1">Cell division inhibitor that blocks the formation of polar Z ring septums. Rapidly oscillates between the poles of the cell to destabilize FtsZ filaments that have formed before they mature into polar Z rings. Prevents FtsZ polymerization.</text>
</comment>
<comment type="subunit">
    <text evidence="1">Interacts with MinD and FtsZ.</text>
</comment>
<comment type="similarity">
    <text evidence="1">Belongs to the MinC family.</text>
</comment>
<evidence type="ECO:0000255" key="1">
    <source>
        <dbReference type="HAMAP-Rule" id="MF_00267"/>
    </source>
</evidence>
<evidence type="ECO:0000256" key="2">
    <source>
        <dbReference type="SAM" id="MobiDB-lite"/>
    </source>
</evidence>
<protein>
    <recommendedName>
        <fullName evidence="1">Probable septum site-determining protein MinC</fullName>
    </recommendedName>
</protein>
<feature type="chain" id="PRO_1000114267" description="Probable septum site-determining protein MinC">
    <location>
        <begin position="1"/>
        <end position="277"/>
    </location>
</feature>
<feature type="region of interest" description="Disordered" evidence="2">
    <location>
        <begin position="137"/>
        <end position="164"/>
    </location>
</feature>
<feature type="compositionally biased region" description="Pro residues" evidence="2">
    <location>
        <begin position="145"/>
        <end position="164"/>
    </location>
</feature>